<accession>P9WFY4</accession>
<accession>L0TEK2</accession>
<accession>P96861</accession>
<accession>Q7D586</accession>
<sequence length="322" mass="34010">MPGNSRRRGAVRKSGTKKGAGVGSGGQRRRGLEGRGPTPPAHLRPHHPAAKRARAQPRRPVKRADETETVLGRNPVLECLRAGVPATALYVALGTEADERLTECVARAADSGIAIVELLRADLDRMTANHLHQGIALQVPPYNYAHPDDLLAAALDQPPALLVALDNLSDPRNLGAIVRSVAAFGGHGVLIPQRRSASVTAVAWRTSAGAAARIPVARATNLTRTLKGWADRGVRVIGLDAGGGTALDDVDGTDSLVVVVGSEGKGLSRLVRQNCDEVVSIPMAAQAESLNASVAAGVVLAEIARQRRRPREPREQTQNRMI</sequence>
<keyword id="KW-0489">Methyltransferase</keyword>
<keyword id="KW-1185">Reference proteome</keyword>
<keyword id="KW-0949">S-adenosyl-L-methionine</keyword>
<keyword id="KW-0808">Transferase</keyword>
<evidence type="ECO:0000250" key="1"/>
<evidence type="ECO:0000256" key="2">
    <source>
        <dbReference type="SAM" id="MobiDB-lite"/>
    </source>
</evidence>
<evidence type="ECO:0000305" key="3"/>
<gene>
    <name type="ordered locus">MT3685</name>
</gene>
<protein>
    <recommendedName>
        <fullName>Uncharacterized tRNA/rRNA methyltransferase MT3685</fullName>
        <ecNumber>2.1.1.-</ecNumber>
    </recommendedName>
</protein>
<organism>
    <name type="scientific">Mycobacterium tuberculosis (strain CDC 1551 / Oshkosh)</name>
    <dbReference type="NCBI Taxonomy" id="83331"/>
    <lineage>
        <taxon>Bacteria</taxon>
        <taxon>Bacillati</taxon>
        <taxon>Actinomycetota</taxon>
        <taxon>Actinomycetes</taxon>
        <taxon>Mycobacteriales</taxon>
        <taxon>Mycobacteriaceae</taxon>
        <taxon>Mycobacterium</taxon>
        <taxon>Mycobacterium tuberculosis complex</taxon>
    </lineage>
</organism>
<reference key="1">
    <citation type="journal article" date="2002" name="J. Bacteriol.">
        <title>Whole-genome comparison of Mycobacterium tuberculosis clinical and laboratory strains.</title>
        <authorList>
            <person name="Fleischmann R.D."/>
            <person name="Alland D."/>
            <person name="Eisen J.A."/>
            <person name="Carpenter L."/>
            <person name="White O."/>
            <person name="Peterson J.D."/>
            <person name="DeBoy R.T."/>
            <person name="Dodson R.J."/>
            <person name="Gwinn M.L."/>
            <person name="Haft D.H."/>
            <person name="Hickey E.K."/>
            <person name="Kolonay J.F."/>
            <person name="Nelson W.C."/>
            <person name="Umayam L.A."/>
            <person name="Ermolaeva M.D."/>
            <person name="Salzberg S.L."/>
            <person name="Delcher A."/>
            <person name="Utterback T.R."/>
            <person name="Weidman J.F."/>
            <person name="Khouri H.M."/>
            <person name="Gill J."/>
            <person name="Mikula A."/>
            <person name="Bishai W."/>
            <person name="Jacobs W.R. Jr."/>
            <person name="Venter J.C."/>
            <person name="Fraser C.M."/>
        </authorList>
    </citation>
    <scope>NUCLEOTIDE SEQUENCE [LARGE SCALE GENOMIC DNA]</scope>
    <source>
        <strain>CDC 1551 / Oshkosh</strain>
    </source>
</reference>
<comment type="similarity">
    <text evidence="3">Belongs to the class IV-like SAM-binding methyltransferase superfamily. RNA methyltransferase TrmH family.</text>
</comment>
<comment type="sequence caution" evidence="3">
    <conflict type="erroneous initiation">
        <sequence resource="EMBL-CDS" id="AAK48043"/>
    </conflict>
</comment>
<feature type="chain" id="PRO_0000428456" description="Uncharacterized tRNA/rRNA methyltransferase MT3685">
    <location>
        <begin position="1"/>
        <end position="322"/>
    </location>
</feature>
<feature type="region of interest" description="Disordered" evidence="2">
    <location>
        <begin position="1"/>
        <end position="69"/>
    </location>
</feature>
<feature type="compositionally biased region" description="Basic residues" evidence="2">
    <location>
        <begin position="1"/>
        <end position="16"/>
    </location>
</feature>
<feature type="compositionally biased region" description="Basic residues" evidence="2">
    <location>
        <begin position="43"/>
        <end position="61"/>
    </location>
</feature>
<feature type="binding site" evidence="1">
    <location>
        <position position="261"/>
    </location>
    <ligand>
        <name>S-adenosyl-L-methionine</name>
        <dbReference type="ChEBI" id="CHEBI:59789"/>
    </ligand>
</feature>
<feature type="binding site" evidence="1">
    <location>
        <position position="281"/>
    </location>
    <ligand>
        <name>S-adenosyl-L-methionine</name>
        <dbReference type="ChEBI" id="CHEBI:59789"/>
    </ligand>
</feature>
<feature type="binding site" evidence="1">
    <location>
        <position position="290"/>
    </location>
    <ligand>
        <name>S-adenosyl-L-methionine</name>
        <dbReference type="ChEBI" id="CHEBI:59789"/>
    </ligand>
</feature>
<dbReference type="EC" id="2.1.1.-"/>
<dbReference type="EMBL" id="AE000516">
    <property type="protein sequence ID" value="AAK48043.1"/>
    <property type="status" value="ALT_INIT"/>
    <property type="molecule type" value="Genomic_DNA"/>
</dbReference>
<dbReference type="PIR" id="A70607">
    <property type="entry name" value="A70607"/>
</dbReference>
<dbReference type="SMR" id="P9WFY4"/>
<dbReference type="KEGG" id="mtc:MT3685"/>
<dbReference type="PATRIC" id="fig|83331.31.peg.3968"/>
<dbReference type="HOGENOM" id="CLU_021322_0_1_11"/>
<dbReference type="Proteomes" id="UP000001020">
    <property type="component" value="Chromosome"/>
</dbReference>
<dbReference type="GO" id="GO:0005829">
    <property type="term" value="C:cytosol"/>
    <property type="evidence" value="ECO:0007669"/>
    <property type="project" value="TreeGrafter"/>
</dbReference>
<dbReference type="GO" id="GO:0003723">
    <property type="term" value="F:RNA binding"/>
    <property type="evidence" value="ECO:0007669"/>
    <property type="project" value="InterPro"/>
</dbReference>
<dbReference type="GO" id="GO:0008173">
    <property type="term" value="F:RNA methyltransferase activity"/>
    <property type="evidence" value="ECO:0007669"/>
    <property type="project" value="InterPro"/>
</dbReference>
<dbReference type="GO" id="GO:0032259">
    <property type="term" value="P:methylation"/>
    <property type="evidence" value="ECO:0007669"/>
    <property type="project" value="UniProtKB-KW"/>
</dbReference>
<dbReference type="GO" id="GO:0006396">
    <property type="term" value="P:RNA processing"/>
    <property type="evidence" value="ECO:0007669"/>
    <property type="project" value="InterPro"/>
</dbReference>
<dbReference type="CDD" id="cd18103">
    <property type="entry name" value="SpoU-like_RlmB"/>
    <property type="match status" value="1"/>
</dbReference>
<dbReference type="FunFam" id="3.30.1330.30:FF:000024">
    <property type="entry name" value="Putative tRNA/rRNA methyltransferase"/>
    <property type="match status" value="1"/>
</dbReference>
<dbReference type="FunFam" id="3.40.1280.10:FF:000015">
    <property type="entry name" value="Putative tRNA/rRNA methyltransferase"/>
    <property type="match status" value="1"/>
</dbReference>
<dbReference type="Gene3D" id="3.30.1330.30">
    <property type="match status" value="1"/>
</dbReference>
<dbReference type="Gene3D" id="3.40.1280.10">
    <property type="match status" value="1"/>
</dbReference>
<dbReference type="InterPro" id="IPR029028">
    <property type="entry name" value="Alpha/beta_knot_MTases"/>
</dbReference>
<dbReference type="InterPro" id="IPR029064">
    <property type="entry name" value="Ribosomal_eL30-like_sf"/>
</dbReference>
<dbReference type="InterPro" id="IPR004441">
    <property type="entry name" value="rRNA_MeTrfase_TrmH"/>
</dbReference>
<dbReference type="InterPro" id="IPR001537">
    <property type="entry name" value="SpoU_MeTrfase"/>
</dbReference>
<dbReference type="InterPro" id="IPR013123">
    <property type="entry name" value="SpoU_subst-bd"/>
</dbReference>
<dbReference type="InterPro" id="IPR029026">
    <property type="entry name" value="tRNA_m1G_MTases_N"/>
</dbReference>
<dbReference type="NCBIfam" id="TIGR00186">
    <property type="entry name" value="rRNA_methyl_3"/>
    <property type="match status" value="1"/>
</dbReference>
<dbReference type="PANTHER" id="PTHR46429">
    <property type="entry name" value="23S RRNA (GUANOSINE-2'-O-)-METHYLTRANSFERASE RLMB"/>
    <property type="match status" value="1"/>
</dbReference>
<dbReference type="PANTHER" id="PTHR46429:SF1">
    <property type="entry name" value="23S RRNA (GUANOSINE-2'-O-)-METHYLTRANSFERASE RLMB"/>
    <property type="match status" value="1"/>
</dbReference>
<dbReference type="Pfam" id="PF00588">
    <property type="entry name" value="SpoU_methylase"/>
    <property type="match status" value="1"/>
</dbReference>
<dbReference type="Pfam" id="PF08032">
    <property type="entry name" value="SpoU_sub_bind"/>
    <property type="match status" value="1"/>
</dbReference>
<dbReference type="SMART" id="SM00967">
    <property type="entry name" value="SpoU_sub_bind"/>
    <property type="match status" value="1"/>
</dbReference>
<dbReference type="SUPFAM" id="SSF75217">
    <property type="entry name" value="alpha/beta knot"/>
    <property type="match status" value="1"/>
</dbReference>
<dbReference type="SUPFAM" id="SSF55315">
    <property type="entry name" value="L30e-like"/>
    <property type="match status" value="1"/>
</dbReference>
<name>Y3579_MYCTO</name>
<proteinExistence type="inferred from homology"/>